<dbReference type="EC" id="3.4.24.-" evidence="10 11"/>
<dbReference type="EMBL" id="KM272923">
    <property type="protein sequence ID" value="AJQ21780.1"/>
    <property type="molecule type" value="Genomic_DNA"/>
</dbReference>
<dbReference type="SMR" id="A0A0C5PRQ1"/>
<dbReference type="BindingDB" id="A0A0C5PRQ1"/>
<dbReference type="ChEMBL" id="CHEMBL3739251"/>
<dbReference type="MEROPS" id="M12.321"/>
<dbReference type="GlyCosmos" id="A0A0C5PRQ1">
    <property type="glycosylation" value="2 sites, No reported glycans"/>
</dbReference>
<dbReference type="BRENDA" id="3.4.24.21">
    <property type="organism ID" value="8716"/>
</dbReference>
<dbReference type="GO" id="GO:0005576">
    <property type="term" value="C:extracellular region"/>
    <property type="evidence" value="ECO:0007669"/>
    <property type="project" value="UniProtKB-SubCell"/>
</dbReference>
<dbReference type="GO" id="GO:0004222">
    <property type="term" value="F:metalloendopeptidase activity"/>
    <property type="evidence" value="ECO:0007669"/>
    <property type="project" value="InterPro"/>
</dbReference>
<dbReference type="GO" id="GO:0008270">
    <property type="term" value="F:zinc ion binding"/>
    <property type="evidence" value="ECO:0007669"/>
    <property type="project" value="InterPro"/>
</dbReference>
<dbReference type="GO" id="GO:0018996">
    <property type="term" value="P:molting cycle, collagen and cuticulin-based cuticle"/>
    <property type="evidence" value="ECO:0007669"/>
    <property type="project" value="InterPro"/>
</dbReference>
<dbReference type="GO" id="GO:0006508">
    <property type="term" value="P:proteolysis"/>
    <property type="evidence" value="ECO:0007669"/>
    <property type="project" value="UniProtKB-KW"/>
</dbReference>
<dbReference type="CDD" id="cd00041">
    <property type="entry name" value="CUB"/>
    <property type="match status" value="1"/>
</dbReference>
<dbReference type="CDD" id="cd04280">
    <property type="entry name" value="ZnMc_astacin_like"/>
    <property type="match status" value="1"/>
</dbReference>
<dbReference type="FunFam" id="2.60.120.290:FF:000093">
    <property type="entry name" value="Zinc metalloproteinase"/>
    <property type="match status" value="1"/>
</dbReference>
<dbReference type="FunFam" id="3.40.390.10:FF:000028">
    <property type="entry name" value="Zinc metalloproteinase"/>
    <property type="match status" value="1"/>
</dbReference>
<dbReference type="Gene3D" id="3.40.390.10">
    <property type="entry name" value="Collagenase (Catalytic Domain)"/>
    <property type="match status" value="1"/>
</dbReference>
<dbReference type="Gene3D" id="2.60.120.290">
    <property type="entry name" value="Spermadhesin, CUB domain"/>
    <property type="match status" value="1"/>
</dbReference>
<dbReference type="Gene3D" id="2.20.100.10">
    <property type="entry name" value="Thrombospondin type-1 (TSP1) repeat"/>
    <property type="match status" value="1"/>
</dbReference>
<dbReference type="InterPro" id="IPR034035">
    <property type="entry name" value="Astacin-like_dom"/>
</dbReference>
<dbReference type="InterPro" id="IPR000859">
    <property type="entry name" value="CUB_dom"/>
</dbReference>
<dbReference type="InterPro" id="IPR000742">
    <property type="entry name" value="EGF-like_dom"/>
</dbReference>
<dbReference type="InterPro" id="IPR024079">
    <property type="entry name" value="MetalloPept_cat_dom_sf"/>
</dbReference>
<dbReference type="InterPro" id="IPR017050">
    <property type="entry name" value="Metallopeptidase_nem"/>
</dbReference>
<dbReference type="InterPro" id="IPR001506">
    <property type="entry name" value="Peptidase_M12A"/>
</dbReference>
<dbReference type="InterPro" id="IPR006026">
    <property type="entry name" value="Peptidase_Metallo"/>
</dbReference>
<dbReference type="InterPro" id="IPR035914">
    <property type="entry name" value="Sperma_CUB_dom_sf"/>
</dbReference>
<dbReference type="InterPro" id="IPR000884">
    <property type="entry name" value="TSP1_rpt"/>
</dbReference>
<dbReference type="InterPro" id="IPR036383">
    <property type="entry name" value="TSP1_rpt_sf"/>
</dbReference>
<dbReference type="PANTHER" id="PTHR10127">
    <property type="entry name" value="DISCOIDIN, CUB, EGF, LAMININ , AND ZINC METALLOPROTEASE DOMAIN CONTAINING"/>
    <property type="match status" value="1"/>
</dbReference>
<dbReference type="PANTHER" id="PTHR10127:SF813">
    <property type="entry name" value="ZINC METALLOPROTEINASE DPY-31"/>
    <property type="match status" value="1"/>
</dbReference>
<dbReference type="Pfam" id="PF01400">
    <property type="entry name" value="Astacin"/>
    <property type="match status" value="1"/>
</dbReference>
<dbReference type="Pfam" id="PF00431">
    <property type="entry name" value="CUB"/>
    <property type="match status" value="1"/>
</dbReference>
<dbReference type="Pfam" id="PF00090">
    <property type="entry name" value="TSP_1"/>
    <property type="match status" value="1"/>
</dbReference>
<dbReference type="PIRSF" id="PIRSF036365">
    <property type="entry name" value="Astacin_nematoda"/>
    <property type="match status" value="1"/>
</dbReference>
<dbReference type="PRINTS" id="PR00480">
    <property type="entry name" value="ASTACIN"/>
</dbReference>
<dbReference type="SMART" id="SM00042">
    <property type="entry name" value="CUB"/>
    <property type="match status" value="1"/>
</dbReference>
<dbReference type="SMART" id="SM00209">
    <property type="entry name" value="TSP1"/>
    <property type="match status" value="1"/>
</dbReference>
<dbReference type="SMART" id="SM00235">
    <property type="entry name" value="ZnMc"/>
    <property type="match status" value="1"/>
</dbReference>
<dbReference type="SUPFAM" id="SSF55486">
    <property type="entry name" value="Metalloproteases ('zincins'), catalytic domain"/>
    <property type="match status" value="1"/>
</dbReference>
<dbReference type="SUPFAM" id="SSF49854">
    <property type="entry name" value="Spermadhesin, CUB domain"/>
    <property type="match status" value="1"/>
</dbReference>
<dbReference type="SUPFAM" id="SSF82895">
    <property type="entry name" value="TSP-1 type 1 repeat"/>
    <property type="match status" value="1"/>
</dbReference>
<dbReference type="PROSITE" id="PS51864">
    <property type="entry name" value="ASTACIN"/>
    <property type="match status" value="1"/>
</dbReference>
<dbReference type="PROSITE" id="PS01180">
    <property type="entry name" value="CUB"/>
    <property type="match status" value="1"/>
</dbReference>
<dbReference type="PROSITE" id="PS00022">
    <property type="entry name" value="EGF_1"/>
    <property type="match status" value="1"/>
</dbReference>
<dbReference type="PROSITE" id="PS01186">
    <property type="entry name" value="EGF_2"/>
    <property type="match status" value="1"/>
</dbReference>
<dbReference type="PROSITE" id="PS50092">
    <property type="entry name" value="TSP1"/>
    <property type="match status" value="1"/>
</dbReference>
<dbReference type="PROSITE" id="PS00142">
    <property type="entry name" value="ZINC_PROTEASE"/>
    <property type="match status" value="1"/>
</dbReference>
<proteinExistence type="evidence at protein level"/>
<organism evidence="13">
    <name type="scientific">Teladorsagia circumcincta</name>
    <name type="common">Brown stomach worm</name>
    <name type="synonym">Ostertagia circumcincta</name>
    <dbReference type="NCBI Taxonomy" id="45464"/>
    <lineage>
        <taxon>Eukaryota</taxon>
        <taxon>Metazoa</taxon>
        <taxon>Ecdysozoa</taxon>
        <taxon>Nematoda</taxon>
        <taxon>Chromadorea</taxon>
        <taxon>Rhabditida</taxon>
        <taxon>Rhabditina</taxon>
        <taxon>Rhabditomorpha</taxon>
        <taxon>Strongyloidea</taxon>
        <taxon>Trichostrongylidae</taxon>
        <taxon>Teladorsagia</taxon>
    </lineage>
</organism>
<evidence type="ECO:0000250" key="1">
    <source>
        <dbReference type="UniProtKB" id="A8Q2D1"/>
    </source>
</evidence>
<evidence type="ECO:0000250" key="2">
    <source>
        <dbReference type="UniProtKB" id="P13497"/>
    </source>
</evidence>
<evidence type="ECO:0000250" key="3">
    <source>
        <dbReference type="UniProtKB" id="P98060"/>
    </source>
</evidence>
<evidence type="ECO:0000255" key="4"/>
<evidence type="ECO:0000255" key="5">
    <source>
        <dbReference type="PROSITE-ProRule" id="PRU00059"/>
    </source>
</evidence>
<evidence type="ECO:0000255" key="6">
    <source>
        <dbReference type="PROSITE-ProRule" id="PRU00076"/>
    </source>
</evidence>
<evidence type="ECO:0000255" key="7">
    <source>
        <dbReference type="PROSITE-ProRule" id="PRU00210"/>
    </source>
</evidence>
<evidence type="ECO:0000255" key="8">
    <source>
        <dbReference type="PROSITE-ProRule" id="PRU00498"/>
    </source>
</evidence>
<evidence type="ECO:0000255" key="9">
    <source>
        <dbReference type="PROSITE-ProRule" id="PRU01211"/>
    </source>
</evidence>
<evidence type="ECO:0000269" key="10">
    <source>
    </source>
</evidence>
<evidence type="ECO:0000269" key="11">
    <source>
    </source>
</evidence>
<evidence type="ECO:0000305" key="12"/>
<evidence type="ECO:0000312" key="13">
    <source>
        <dbReference type="EMBL" id="AJQ21780.1"/>
    </source>
</evidence>
<sequence length="614" mass="69695">MSLLRCTTLLLVVVAIALPPCILGYSLHDGSRLDDFLTESAADRRPRRPTTAAQRRLMGLTEEQYKTVHFYLNKLKELGNQRHPEGYDKDTTKDEADKWRKRMRDDIEGELLNPEEYGRHFEGDIILFPEQAKQIYENALKTGQRRVKRKFIGSDLRRWDPTRPIVYSFDGSHTSREQRIIELALEHWHNITCLNFVRNDNANSGNRIVFTDVDGCASNVGRHPLGEEQLVSLAPECIRLGVIAHEVAHALGFWHEQSRPDRDQFVNVRWENIDKDSKGQFLKEDPDDVDNAGVPYDYGSIMHYRSKAFSRYDDLYTISTFVTDYQKTIGQRDQLSFNDIRLMNKIYCSNVCSRKLPCQRGGYTDPRRCDRCRCPDGFTGQFCEQVMPGYGAVCGGRIQVNGGWTKFSSPGYPREFKEGQECSWLLVAPHGQVVEMQFIGEFEMYCKVRHSLCMDYVEVRNSTDFANTGMRYCCYGTPSTSIRSATTDLVVLFRSFYRGGRGFEARARALPANGQWASWSPWTPCTASCGACGSRMRTRVCSHGACAGEPVENQVCNTHPCNGLCAHKKTEDGECGGFLALLRGVRCKQERTVMEPCENACCPGFSVVGGRCVR</sequence>
<reference evidence="13" key="1">
    <citation type="journal article" date="2015" name="Int. J. Parasitol.">
        <title>A highly conserved, inhibitable astacin metalloprotease from Teladorsagia circumcincta is required for cuticle formation and nematode development.</title>
        <authorList>
            <person name="Stepek G."/>
            <person name="McCormack G."/>
            <person name="Winter A.D."/>
            <person name="Page A.P."/>
        </authorList>
    </citation>
    <scope>NUCLEOTIDE SEQUENCE [GENOMIC DNA]</scope>
    <scope>CATALYTIC ACTIVITY</scope>
    <scope>ACTIVITY REGULATION</scope>
</reference>
<reference key="2">
    <citation type="journal article" date="2015" name="Bioorg. Med. Chem. Lett.">
        <title>Identification and activity of inhibitors of the essential nematode-specific metalloprotease DPY-31.</title>
        <authorList>
            <person name="France D.J."/>
            <person name="Stepek G."/>
            <person name="Houston D.R."/>
            <person name="Williams L."/>
            <person name="McCormack G."/>
            <person name="Walkinshaw M.D."/>
            <person name="Page A.P."/>
        </authorList>
    </citation>
    <scope>CATALYTIC ACTIVITY</scope>
    <scope>ACTIVITY REGULATION</scope>
</reference>
<name>NAS35_TELCI</name>
<accession>A0A0C5PRQ1</accession>
<protein>
    <recommendedName>
        <fullName evidence="3">Zinc metalloproteinase dpy-31</fullName>
        <ecNumber evidence="10 11">3.4.24.-</ecNumber>
    </recommendedName>
    <alternativeName>
        <fullName evidence="3">Nematode astacin 35</fullName>
    </alternativeName>
    <alternativeName>
        <fullName evidence="3">Procollagen C-proteinase</fullName>
    </alternativeName>
</protein>
<comment type="function">
    <text evidence="1">Metalloprotease which cleaves the carboxyl terminus of procollagens to mature collagens. Probably involved in cuticular collagen maturation.</text>
</comment>
<comment type="cofactor">
    <cofactor evidence="9">
        <name>Zn(2+)</name>
        <dbReference type="ChEBI" id="CHEBI:29105"/>
    </cofactor>
    <text evidence="9">Binds 1 zinc ion per subunit.</text>
</comment>
<comment type="activity regulation">
    <text evidence="10 11">Inhibited by marimastat and tripeptide hydroxamic acids (PubMed:26546217). Inhibited by 1,10-phenanthroline (PubMed:25736599).</text>
</comment>
<comment type="subcellular location">
    <subcellularLocation>
        <location evidence="12">Secreted</location>
    </subcellularLocation>
</comment>
<feature type="signal peptide" evidence="4">
    <location>
        <begin position="1"/>
        <end position="24"/>
    </location>
</feature>
<feature type="propeptide" id="PRO_0000442247" evidence="2">
    <location>
        <begin position="25"/>
        <end position="150"/>
    </location>
</feature>
<feature type="chain" id="PRO_5005111502" description="Zinc metalloproteinase dpy-31" evidence="4">
    <location>
        <begin position="151"/>
        <end position="614"/>
    </location>
</feature>
<feature type="domain" description="Peptidase M12A" evidence="9">
    <location>
        <begin position="150"/>
        <end position="349"/>
    </location>
</feature>
<feature type="domain" description="EGF-like" evidence="6">
    <location>
        <begin position="344"/>
        <end position="384"/>
    </location>
</feature>
<feature type="domain" description="CUB" evidence="5">
    <location>
        <begin position="394"/>
        <end position="510"/>
    </location>
</feature>
<feature type="domain" description="TSP type-1" evidence="7">
    <location>
        <begin position="513"/>
        <end position="562"/>
    </location>
</feature>
<feature type="active site" evidence="9">
    <location>
        <position position="246"/>
    </location>
</feature>
<feature type="binding site" evidence="9">
    <location>
        <position position="245"/>
    </location>
    <ligand>
        <name>Zn(2+)</name>
        <dbReference type="ChEBI" id="CHEBI:29105"/>
        <note>catalytic</note>
    </ligand>
</feature>
<feature type="binding site" evidence="9">
    <location>
        <position position="249"/>
    </location>
    <ligand>
        <name>Zn(2+)</name>
        <dbReference type="ChEBI" id="CHEBI:29105"/>
        <note>catalytic</note>
    </ligand>
</feature>
<feature type="binding site" evidence="9">
    <location>
        <position position="255"/>
    </location>
    <ligand>
        <name>Zn(2+)</name>
        <dbReference type="ChEBI" id="CHEBI:29105"/>
        <note>catalytic</note>
    </ligand>
</feature>
<feature type="glycosylation site" description="N-linked (GlcNAc...) asparagine" evidence="8">
    <location>
        <position position="190"/>
    </location>
</feature>
<feature type="glycosylation site" description="N-linked (GlcNAc...) asparagine" evidence="8">
    <location>
        <position position="461"/>
    </location>
</feature>
<feature type="disulfide bond" evidence="9">
    <location>
        <begin position="193"/>
        <end position="348"/>
    </location>
</feature>
<feature type="disulfide bond" evidence="9">
    <location>
        <begin position="216"/>
        <end position="237"/>
    </location>
</feature>
<feature type="disulfide bond" evidence="6">
    <location>
        <begin position="352"/>
        <end position="372"/>
    </location>
</feature>
<feature type="disulfide bond" evidence="6">
    <location>
        <begin position="374"/>
        <end position="383"/>
    </location>
</feature>
<feature type="disulfide bond" evidence="5">
    <location>
        <begin position="394"/>
        <end position="422"/>
    </location>
</feature>
<feature type="disulfide bond" evidence="7">
    <location>
        <begin position="525"/>
        <end position="556"/>
    </location>
</feature>
<feature type="disulfide bond" evidence="7">
    <location>
        <begin position="529"/>
        <end position="561"/>
    </location>
</feature>
<feature type="disulfide bond" evidence="7">
    <location>
        <begin position="541"/>
        <end position="546"/>
    </location>
</feature>
<keyword id="KW-0165">Cleavage on pair of basic residues</keyword>
<keyword id="KW-1015">Disulfide bond</keyword>
<keyword id="KW-0245">EGF-like domain</keyword>
<keyword id="KW-0325">Glycoprotein</keyword>
<keyword id="KW-0378">Hydrolase</keyword>
<keyword id="KW-0479">Metal-binding</keyword>
<keyword id="KW-0482">Metalloprotease</keyword>
<keyword id="KW-0645">Protease</keyword>
<keyword id="KW-0964">Secreted</keyword>
<keyword id="KW-0732">Signal</keyword>
<keyword id="KW-0862">Zinc</keyword>
<keyword id="KW-0865">Zymogen</keyword>
<gene>
    <name evidence="13" type="primary">dpy-31</name>
    <name evidence="3" type="synonym">nas-35</name>
</gene>